<feature type="initiator methionine" description="Removed" evidence="2">
    <location>
        <position position="1"/>
    </location>
</feature>
<feature type="chain" id="PRO_0000166752" description="Thioredoxin reductase">
    <location>
        <begin position="2"/>
        <end position="322"/>
    </location>
</feature>
<feature type="binding site" evidence="1">
    <location>
        <begin position="12"/>
        <end position="15"/>
    </location>
    <ligand>
        <name>FAD</name>
        <dbReference type="ChEBI" id="CHEBI:57692"/>
    </ligand>
</feature>
<feature type="binding site" evidence="1">
    <location>
        <begin position="34"/>
        <end position="42"/>
    </location>
    <ligand>
        <name>FAD</name>
        <dbReference type="ChEBI" id="CHEBI:57692"/>
    </ligand>
</feature>
<feature type="binding site" evidence="1">
    <location>
        <position position="51"/>
    </location>
    <ligand>
        <name>FAD</name>
        <dbReference type="ChEBI" id="CHEBI:57692"/>
    </ligand>
</feature>
<feature type="binding site" evidence="1">
    <location>
        <position position="84"/>
    </location>
    <ligand>
        <name>FAD</name>
        <dbReference type="ChEBI" id="CHEBI:57692"/>
    </ligand>
</feature>
<feature type="binding site" evidence="1">
    <location>
        <position position="176"/>
    </location>
    <ligand>
        <name>NADP(+)</name>
        <dbReference type="ChEBI" id="CHEBI:58349"/>
    </ligand>
</feature>
<feature type="binding site" evidence="1">
    <location>
        <position position="182"/>
    </location>
    <ligand>
        <name>NADP(+)</name>
        <dbReference type="ChEBI" id="CHEBI:58349"/>
    </ligand>
</feature>
<feature type="binding site" evidence="1">
    <location>
        <position position="259"/>
    </location>
    <ligand>
        <name>NADP(+)</name>
        <dbReference type="ChEBI" id="CHEBI:58349"/>
    </ligand>
</feature>
<feature type="binding site" evidence="1">
    <location>
        <position position="279"/>
    </location>
    <ligand>
        <name>FAD</name>
        <dbReference type="ChEBI" id="CHEBI:57692"/>
    </ligand>
</feature>
<feature type="binding site" evidence="1">
    <location>
        <begin position="286"/>
        <end position="289"/>
    </location>
    <ligand>
        <name>FAD</name>
        <dbReference type="ChEBI" id="CHEBI:57692"/>
    </ligand>
</feature>
<feature type="binding site" evidence="1">
    <location>
        <position position="286"/>
    </location>
    <ligand>
        <name>NADP(+)</name>
        <dbReference type="ChEBI" id="CHEBI:58349"/>
    </ligand>
</feature>
<feature type="disulfide bond" description="Redox-active" evidence="1">
    <location>
        <begin position="136"/>
        <end position="139"/>
    </location>
</feature>
<keyword id="KW-0903">Direct protein sequencing</keyword>
<keyword id="KW-1015">Disulfide bond</keyword>
<keyword id="KW-0274">FAD</keyword>
<keyword id="KW-0285">Flavoprotein</keyword>
<keyword id="KW-0521">NADP</keyword>
<keyword id="KW-0560">Oxidoreductase</keyword>
<keyword id="KW-0676">Redox-active center</keyword>
<gene>
    <name evidence="4" type="primary">trxB</name>
</gene>
<reference key="1">
    <citation type="journal article" date="1993" name="J. Bacteriol.">
        <title>Thioredoxin-thioredoxin reductase system of Streptomyces clavuligerus: sequences, expression, and organization of the genes.</title>
        <authorList>
            <person name="Cohen G."/>
            <person name="Yanko M."/>
            <person name="Mislovati M."/>
            <person name="Argaman A."/>
            <person name="Schreiber R."/>
            <person name="Av-Gay Y."/>
            <person name="Aharonowitz Y."/>
        </authorList>
    </citation>
    <scope>NUCLEOTIDE SEQUENCE [GENOMIC DNA]</scope>
    <scope>PROTEIN SEQUENCE OF 2-33</scope>
    <scope>CATALYTIC ACTIVITY</scope>
    <source>
        <strain>ATCC 27064 / DSM 738 / JCM 4710 / NBRC 13307 / NCIMB 12785 / NRRL 3585 / VKM Ac-602</strain>
    </source>
</reference>
<reference key="2">
    <citation type="journal article" date="1993" name="J. Bacteriol.">
        <title>Characterization of a broad-range disulfide reductase from Streptomyces clavuligerus and its possible role in beta-lactam antibiotic biosynthesis.</title>
        <authorList>
            <person name="Aharonowitz Y."/>
            <person name="Av-Gay Y."/>
            <person name="Schreiber R."/>
            <person name="Cohen G."/>
        </authorList>
    </citation>
    <scope>FUNCTION</scope>
    <scope>SUBUNIT</scope>
    <source>
        <strain>ATCC 27064 / DSM 738 / JCM 4710 / NBRC 13307 / NCIMB 12785 / NRRL 3585 / VKM Ac-602</strain>
    </source>
</reference>
<proteinExistence type="evidence at protein level"/>
<accession>Q05741</accession>
<organism>
    <name type="scientific">Streptomyces clavuligerus</name>
    <dbReference type="NCBI Taxonomy" id="1901"/>
    <lineage>
        <taxon>Bacteria</taxon>
        <taxon>Bacillati</taxon>
        <taxon>Actinomycetota</taxon>
        <taxon>Actinomycetes</taxon>
        <taxon>Kitasatosporales</taxon>
        <taxon>Streptomycetaceae</taxon>
        <taxon>Streptomyces</taxon>
    </lineage>
</organism>
<comment type="function">
    <text evidence="3">Component of the thioredoxin-thioredoxin reductase system which may be involved in biosynthesis of penicillins and cephalosporins and may be important in determining the thiol-disulfide redox balance.</text>
</comment>
<comment type="catalytic activity">
    <reaction evidence="2">
        <text>[thioredoxin]-dithiol + NADP(+) = [thioredoxin]-disulfide + NADPH + H(+)</text>
        <dbReference type="Rhea" id="RHEA:20345"/>
        <dbReference type="Rhea" id="RHEA-COMP:10698"/>
        <dbReference type="Rhea" id="RHEA-COMP:10700"/>
        <dbReference type="ChEBI" id="CHEBI:15378"/>
        <dbReference type="ChEBI" id="CHEBI:29950"/>
        <dbReference type="ChEBI" id="CHEBI:50058"/>
        <dbReference type="ChEBI" id="CHEBI:57783"/>
        <dbReference type="ChEBI" id="CHEBI:58349"/>
        <dbReference type="EC" id="1.8.1.9"/>
    </reaction>
</comment>
<comment type="cofactor">
    <cofactor evidence="1">
        <name>FAD</name>
        <dbReference type="ChEBI" id="CHEBI:57692"/>
    </cofactor>
    <text evidence="1">Binds 1 FAD per subunit.</text>
</comment>
<comment type="subunit">
    <text evidence="3">Homodimer.</text>
</comment>
<comment type="miscellaneous">
    <text evidence="1">The active site is a redox-active disulfide bond.</text>
</comment>
<comment type="similarity">
    <text evidence="5">Belongs to the class-II pyridine nucleotide-disulfide oxidoreductase family.</text>
</comment>
<name>TRXB_STRCL</name>
<dbReference type="EC" id="1.8.1.9" evidence="2"/>
<dbReference type="EMBL" id="Z21946">
    <property type="protein sequence ID" value="CAA79940.1"/>
    <property type="molecule type" value="Genomic_DNA"/>
</dbReference>
<dbReference type="PIR" id="A53307">
    <property type="entry name" value="A53307"/>
</dbReference>
<dbReference type="RefSeq" id="WP_003956511.1">
    <property type="nucleotide sequence ID" value="NZ_CM000913.1"/>
</dbReference>
<dbReference type="SMR" id="Q05741"/>
<dbReference type="STRING" id="1901.BB341_14075"/>
<dbReference type="GeneID" id="93730563"/>
<dbReference type="eggNOG" id="COG0492">
    <property type="taxonomic scope" value="Bacteria"/>
</dbReference>
<dbReference type="OrthoDB" id="9806179at2"/>
<dbReference type="GO" id="GO:0005737">
    <property type="term" value="C:cytoplasm"/>
    <property type="evidence" value="ECO:0007669"/>
    <property type="project" value="InterPro"/>
</dbReference>
<dbReference type="GO" id="GO:0004791">
    <property type="term" value="F:thioredoxin-disulfide reductase (NADPH) activity"/>
    <property type="evidence" value="ECO:0007669"/>
    <property type="project" value="UniProtKB-EC"/>
</dbReference>
<dbReference type="GO" id="GO:0019430">
    <property type="term" value="P:removal of superoxide radicals"/>
    <property type="evidence" value="ECO:0007669"/>
    <property type="project" value="InterPro"/>
</dbReference>
<dbReference type="Gene3D" id="3.50.50.60">
    <property type="entry name" value="FAD/NAD(P)-binding domain"/>
    <property type="match status" value="2"/>
</dbReference>
<dbReference type="InterPro" id="IPR036188">
    <property type="entry name" value="FAD/NAD-bd_sf"/>
</dbReference>
<dbReference type="InterPro" id="IPR023753">
    <property type="entry name" value="FAD/NAD-binding_dom"/>
</dbReference>
<dbReference type="InterPro" id="IPR050097">
    <property type="entry name" value="Ferredoxin-NADP_redctase_2"/>
</dbReference>
<dbReference type="InterPro" id="IPR008255">
    <property type="entry name" value="Pyr_nucl-diS_OxRdtase_2_AS"/>
</dbReference>
<dbReference type="InterPro" id="IPR005982">
    <property type="entry name" value="Thioredox_Rdtase"/>
</dbReference>
<dbReference type="NCBIfam" id="TIGR01292">
    <property type="entry name" value="TRX_reduct"/>
    <property type="match status" value="1"/>
</dbReference>
<dbReference type="PANTHER" id="PTHR48105">
    <property type="entry name" value="THIOREDOXIN REDUCTASE 1-RELATED-RELATED"/>
    <property type="match status" value="1"/>
</dbReference>
<dbReference type="Pfam" id="PF07992">
    <property type="entry name" value="Pyr_redox_2"/>
    <property type="match status" value="1"/>
</dbReference>
<dbReference type="PRINTS" id="PR00368">
    <property type="entry name" value="FADPNR"/>
</dbReference>
<dbReference type="PRINTS" id="PR00469">
    <property type="entry name" value="PNDRDTASEII"/>
</dbReference>
<dbReference type="SUPFAM" id="SSF51905">
    <property type="entry name" value="FAD/NAD(P)-binding domain"/>
    <property type="match status" value="1"/>
</dbReference>
<dbReference type="PROSITE" id="PS00573">
    <property type="entry name" value="PYRIDINE_REDOX_2"/>
    <property type="match status" value="1"/>
</dbReference>
<evidence type="ECO:0000250" key="1">
    <source>
        <dbReference type="UniProtKB" id="P9WHH1"/>
    </source>
</evidence>
<evidence type="ECO:0000269" key="2">
    <source>
    </source>
</evidence>
<evidence type="ECO:0000269" key="3">
    <source>
    </source>
</evidence>
<evidence type="ECO:0000303" key="4">
    <source>
    </source>
</evidence>
<evidence type="ECO:0000305" key="5"/>
<protein>
    <recommendedName>
        <fullName evidence="4">Thioredoxin reductase</fullName>
        <shortName>TRXR</shortName>
        <ecNumber evidence="2">1.8.1.9</ecNumber>
    </recommendedName>
</protein>
<sequence length="322" mass="34146">MSDVRNVIIIGSGPAGYTAALYTARASLQPLVFEGAVTAGGALMNTTDVENFPGFRDGIMGPDLMDNMRAQAERFGAELIPDDVVSVDLTGDIKTVTDSAGTVHRAKAVIVTTGSQHRKLGLPREDALSGRGVSWCATCDGFFFKDQDIVVVGGGDTAMEEATFLSRFAKSVTIVHRRDSLRASKAMQDRAFADPKISFAWNSEVATIHGEQKLTGLTLRDTKTGETRELAATGLFIAVGHDPRTELFKGQLDLDDEGYLKVASPSTRTNLTGVFAAGDVVDHTYRQAITAAGTGCSAALDAERYLAALADSEQIAEPAPAV</sequence>